<reference key="1">
    <citation type="journal article" date="1998" name="Nucleic Acids Res.">
        <title>The hyperthermophilic bacterium Thermotoga maritima has two different classes of family C DNA polymerases: evolutionary implications.</title>
        <authorList>
            <person name="Huang Y.P."/>
            <person name="Ito J."/>
        </authorList>
    </citation>
    <scope>NUCLEOTIDE SEQUENCE [GENOMIC DNA]</scope>
</reference>
<reference key="2">
    <citation type="journal article" date="1999" name="Nature">
        <title>Evidence for lateral gene transfer between Archaea and Bacteria from genome sequence of Thermotoga maritima.</title>
        <authorList>
            <person name="Nelson K.E."/>
            <person name="Clayton R.A."/>
            <person name="Gill S.R."/>
            <person name="Gwinn M.L."/>
            <person name="Dodson R.J."/>
            <person name="Haft D.H."/>
            <person name="Hickey E.K."/>
            <person name="Peterson J.D."/>
            <person name="Nelson W.C."/>
            <person name="Ketchum K.A."/>
            <person name="McDonald L.A."/>
            <person name="Utterback T.R."/>
            <person name="Malek J.A."/>
            <person name="Linher K.D."/>
            <person name="Garrett M.M."/>
            <person name="Stewart A.M."/>
            <person name="Cotton M.D."/>
            <person name="Pratt M.S."/>
            <person name="Phillips C.A."/>
            <person name="Richardson D.L."/>
            <person name="Heidelberg J.F."/>
            <person name="Sutton G.G."/>
            <person name="Fleischmann R.D."/>
            <person name="Eisen J.A."/>
            <person name="White O."/>
            <person name="Salzberg S.L."/>
            <person name="Smith H.O."/>
            <person name="Venter J.C."/>
            <person name="Fraser C.M."/>
        </authorList>
    </citation>
    <scope>NUCLEOTIDE SEQUENCE [LARGE SCALE GENOMIC DNA]</scope>
    <source>
        <strain>ATCC 43589 / DSM 3109 / JCM 10099 / NBRC 100826 / MSB8</strain>
    </source>
</reference>
<proteinExistence type="inferred from homology"/>
<name>DPO3A_THEMA</name>
<comment type="function">
    <text evidence="1">DNA polymerase III is a complex, multichain enzyme responsible for most of the replicative synthesis in bacteria. This DNA polymerase also exhibits 3' to 5' exonuclease activity. The alpha chain is the DNA polymerase (By similarity).</text>
</comment>
<comment type="catalytic activity">
    <reaction>
        <text>DNA(n) + a 2'-deoxyribonucleoside 5'-triphosphate = DNA(n+1) + diphosphate</text>
        <dbReference type="Rhea" id="RHEA:22508"/>
        <dbReference type="Rhea" id="RHEA-COMP:17339"/>
        <dbReference type="Rhea" id="RHEA-COMP:17340"/>
        <dbReference type="ChEBI" id="CHEBI:33019"/>
        <dbReference type="ChEBI" id="CHEBI:61560"/>
        <dbReference type="ChEBI" id="CHEBI:173112"/>
        <dbReference type="EC" id="2.7.7.7"/>
    </reaction>
</comment>
<comment type="subunit">
    <text evidence="1">DNA polymerase III contains a core (composed of alpha, epsilon and theta chains) that associates with a tau subunit. This core dimerizes to form the PolIII' complex. PolIII' associates with the gamma complex (composed of gamma, delta, delta', psi and chi chains) and with the beta chain to form the complete DNA polymerase III complex (By similarity).</text>
</comment>
<comment type="subcellular location">
    <subcellularLocation>
        <location evidence="1">Cytoplasm</location>
    </subcellularLocation>
</comment>
<comment type="similarity">
    <text evidence="2">Belongs to the DNA polymerase type-C family. DnaE subfamily.</text>
</comment>
<protein>
    <recommendedName>
        <fullName>DNA polymerase III subunit alpha</fullName>
        <ecNumber>2.7.7.7</ecNumber>
    </recommendedName>
</protein>
<gene>
    <name type="primary">dnaE</name>
    <name type="ordered locus">TM_0461</name>
</gene>
<evidence type="ECO:0000250" key="1"/>
<evidence type="ECO:0000305" key="2"/>
<dbReference type="EC" id="2.7.7.7"/>
<dbReference type="EMBL" id="AF063188">
    <property type="protein sequence ID" value="AAC80434.1"/>
    <property type="molecule type" value="Genomic_DNA"/>
</dbReference>
<dbReference type="EMBL" id="AE000512">
    <property type="protein sequence ID" value="AAD35546.1"/>
    <property type="molecule type" value="Genomic_DNA"/>
</dbReference>
<dbReference type="PIR" id="E72373">
    <property type="entry name" value="E72373"/>
</dbReference>
<dbReference type="RefSeq" id="NP_228271.1">
    <property type="nucleotide sequence ID" value="NC_000853.1"/>
</dbReference>
<dbReference type="RefSeq" id="WP_004081505.1">
    <property type="nucleotide sequence ID" value="NZ_CP011107.1"/>
</dbReference>
<dbReference type="SMR" id="Q9ZHG4"/>
<dbReference type="FunCoup" id="Q9ZHG4">
    <property type="interactions" value="300"/>
</dbReference>
<dbReference type="STRING" id="243274.TM_0461"/>
<dbReference type="PaxDb" id="243274-THEMA_02385"/>
<dbReference type="EnsemblBacteria" id="AAD35546">
    <property type="protein sequence ID" value="AAD35546"/>
    <property type="gene ID" value="TM_0461"/>
</dbReference>
<dbReference type="KEGG" id="tma:TM0461"/>
<dbReference type="KEGG" id="tmi:THEMA_02385"/>
<dbReference type="KEGG" id="tmm:Tmari_0458"/>
<dbReference type="KEGG" id="tmw:THMA_0471"/>
<dbReference type="eggNOG" id="COG0587">
    <property type="taxonomic scope" value="Bacteria"/>
</dbReference>
<dbReference type="InParanoid" id="Q9ZHG4"/>
<dbReference type="OrthoDB" id="9803237at2"/>
<dbReference type="Proteomes" id="UP000008183">
    <property type="component" value="Chromosome"/>
</dbReference>
<dbReference type="GO" id="GO:0005737">
    <property type="term" value="C:cytoplasm"/>
    <property type="evidence" value="ECO:0007669"/>
    <property type="project" value="UniProtKB-SubCell"/>
</dbReference>
<dbReference type="GO" id="GO:0008408">
    <property type="term" value="F:3'-5' exonuclease activity"/>
    <property type="evidence" value="ECO:0007669"/>
    <property type="project" value="InterPro"/>
</dbReference>
<dbReference type="GO" id="GO:0003887">
    <property type="term" value="F:DNA-directed DNA polymerase activity"/>
    <property type="evidence" value="ECO:0000318"/>
    <property type="project" value="GO_Central"/>
</dbReference>
<dbReference type="GO" id="GO:0006260">
    <property type="term" value="P:DNA replication"/>
    <property type="evidence" value="ECO:0007669"/>
    <property type="project" value="UniProtKB-KW"/>
</dbReference>
<dbReference type="Gene3D" id="1.10.150.870">
    <property type="match status" value="1"/>
</dbReference>
<dbReference type="InterPro" id="IPR011708">
    <property type="entry name" value="DNA_pol3_alpha_NTPase_dom"/>
</dbReference>
<dbReference type="InterPro" id="IPR040982">
    <property type="entry name" value="DNA_pol3_finger"/>
</dbReference>
<dbReference type="InterPro" id="IPR004805">
    <property type="entry name" value="DnaE2/DnaE/PolC"/>
</dbReference>
<dbReference type="InterPro" id="IPR029460">
    <property type="entry name" value="DNAPol_HHH"/>
</dbReference>
<dbReference type="InterPro" id="IPR003141">
    <property type="entry name" value="Pol/His_phosphatase_N"/>
</dbReference>
<dbReference type="PANTHER" id="PTHR32294">
    <property type="entry name" value="DNA POLYMERASE III SUBUNIT ALPHA"/>
    <property type="match status" value="1"/>
</dbReference>
<dbReference type="PANTHER" id="PTHR32294:SF0">
    <property type="entry name" value="DNA POLYMERASE III SUBUNIT ALPHA"/>
    <property type="match status" value="1"/>
</dbReference>
<dbReference type="Pfam" id="PF07733">
    <property type="entry name" value="DNA_pol3_alpha"/>
    <property type="match status" value="2"/>
</dbReference>
<dbReference type="Pfam" id="PF17657">
    <property type="entry name" value="DNA_pol3_finger"/>
    <property type="match status" value="1"/>
</dbReference>
<dbReference type="Pfam" id="PF14579">
    <property type="entry name" value="HHH_6"/>
    <property type="match status" value="1"/>
</dbReference>
<dbReference type="SMART" id="SM00481">
    <property type="entry name" value="POLIIIAc"/>
    <property type="match status" value="1"/>
</dbReference>
<feature type="chain" id="PRO_0000103355" description="DNA polymerase III subunit alpha">
    <location>
        <begin position="1"/>
        <end position="842"/>
    </location>
</feature>
<feature type="sequence conflict" description="In Ref. 1; AAC80434." evidence="2" ref="1">
    <original>I</original>
    <variation>M</variation>
    <location>
        <position position="377"/>
    </location>
</feature>
<accession>Q9ZHG4</accession>
<keyword id="KW-0963">Cytoplasm</keyword>
<keyword id="KW-0235">DNA replication</keyword>
<keyword id="KW-0239">DNA-directed DNA polymerase</keyword>
<keyword id="KW-0548">Nucleotidyltransferase</keyword>
<keyword id="KW-1185">Reference proteome</keyword>
<keyword id="KW-0808">Transferase</keyword>
<sequence length="842" mass="96500">MIPWVISPYSFDGSVVRFEKLALLLKRKGLKSVILADRNFHAAVKFNTIMRKHGLIPVHGLWKDGRIFVARNREEFDSLVRYYNGETHEIEDIPVFQESELTPVRYLDASEKKASIFMRKIFGLDEDVQGFPEKCEDVADILNAEAYDLRVNHRFPTPPKNWNELLIKKAEPLGEEYISRLKRELEVIKRKGFTPYIYTVEKVVEIAKKMGIKVGPGRGSAVGSLVAYLCGITEVDPIKYDLLFERFLNEERQEPPDIDVDVEDRRRKDLIKELSKSFQVYQVSTFGNLTEKSLKNLINSVLPDASLEEKNEIYKTVYGLPHHPSVHAAGVVISENPLPLPTRTEEDIPITDYDMYDLQEIGVVKIDILGLKTLSFIKDFKKEIFDYSDEKTYHLISKGKTLGVFQLEGLQARKLCRRISPRNMDELSILLALNRPGPLRSGLDVMFSNSKNVPAFFRKMFPETRGVLIYQEQIMRLAMFAGLSGTEADILRRAIAKKEREKMEPLLEKMKKGLLEKGMENAEQILEILLNFSSYAFNKSHSVAYAHITYQTAYLKAHHLEEFFKLYFAYNSSDAGKIFLAVQELRNEGYRVHPPDINISGKDLVFHGKDVYLPLTVVKGVGVTLVEQIEKIRPVSSVRELQERVTGVPRNVVESLITAGAFDKLYENRKLALEELNKRVEKDILEIRSLFGEKVEQESSNIKIGDITELEEKSMGFPLTPVHEVPTGLFARIDDVFTYGRILPVLVKRVSRNIVTDGLSVCRVRTDVPDGVHLVLLSPLQKIIKIWPFNENTRFVYRVDFTATLEKAGQNEITEVLKNGAVVRYEGYRPLTDEYRYRVVPR</sequence>
<organism>
    <name type="scientific">Thermotoga maritima (strain ATCC 43589 / DSM 3109 / JCM 10099 / NBRC 100826 / MSB8)</name>
    <dbReference type="NCBI Taxonomy" id="243274"/>
    <lineage>
        <taxon>Bacteria</taxon>
        <taxon>Thermotogati</taxon>
        <taxon>Thermotogota</taxon>
        <taxon>Thermotogae</taxon>
        <taxon>Thermotogales</taxon>
        <taxon>Thermotogaceae</taxon>
        <taxon>Thermotoga</taxon>
    </lineage>
</organism>